<keyword id="KW-0275">Fatty acid biosynthesis</keyword>
<keyword id="KW-0276">Fatty acid metabolism</keyword>
<keyword id="KW-0444">Lipid biosynthesis</keyword>
<keyword id="KW-0443">Lipid metabolism</keyword>
<keyword id="KW-0472">Membrane</keyword>
<keyword id="KW-0560">Oxidoreductase</keyword>
<keyword id="KW-0812">Transmembrane</keyword>
<keyword id="KW-1133">Transmembrane helix</keyword>
<comment type="function">
    <text evidence="2">Delta(12)-fatty acid desaturase producing in a heterologous system linoleic acid (18:2(9Z,12Z)) and to a lower extent hexadecadienoic acid (16:2(9Z,12Z)).</text>
</comment>
<comment type="pathway">
    <text>Lipid metabolism; polyunsaturated fatty acid biosynthesis.</text>
</comment>
<comment type="subcellular location">
    <subcellularLocation>
        <location evidence="1">Membrane</location>
        <topology evidence="1">Multi-pass membrane protein</topology>
    </subcellularLocation>
</comment>
<comment type="domain">
    <text evidence="4">The histidine box domains may contain the active site and/or be involved in metal ion binding.</text>
</comment>
<comment type="similarity">
    <text evidence="4">Belongs to the fatty acid desaturase type 1 family.</text>
</comment>
<proteinExistence type="evidence at transcript level"/>
<organism evidence="5">
    <name type="scientific">Trichosanthes kirilowii</name>
    <name type="common">Chinese snake gourd</name>
    <name type="synonym">Chinese cucumber</name>
    <dbReference type="NCBI Taxonomy" id="3677"/>
    <lineage>
        <taxon>Eukaryota</taxon>
        <taxon>Viridiplantae</taxon>
        <taxon>Streptophyta</taxon>
        <taxon>Embryophyta</taxon>
        <taxon>Tracheophyta</taxon>
        <taxon>Spermatophyta</taxon>
        <taxon>Magnoliopsida</taxon>
        <taxon>eudicotyledons</taxon>
        <taxon>Gunneridae</taxon>
        <taxon>Pentapetalae</taxon>
        <taxon>rosids</taxon>
        <taxon>fabids</taxon>
        <taxon>Cucurbitales</taxon>
        <taxon>Cucurbitaceae</taxon>
        <taxon>Sicyoeae</taxon>
        <taxon>Trichosanthes</taxon>
    </lineage>
</organism>
<evidence type="ECO:0000255" key="1"/>
<evidence type="ECO:0000269" key="2">
    <source>
    </source>
</evidence>
<evidence type="ECO:0000303" key="3">
    <source>
    </source>
</evidence>
<evidence type="ECO:0000305" key="4"/>
<evidence type="ECO:0000312" key="5">
    <source>
        <dbReference type="EMBL" id="AAO37752.1"/>
    </source>
</evidence>
<name>FAD12_TRIKI</name>
<sequence length="369" mass="43103">MEKGVQERVPHAKPPFTLSQIKKVVPPHCFHRSLLRSFSYLLSDLAFVSLFFYLAIAYFPLLPHPFPYIAWPLYWIFQGCSLTGVWVIAHECGHHAFSDYQLIDDIVGLFFHSALLVPYFSWKYSHRRHHSNTGSLERDEVFVPKPKSQIPWYLKYFNNPPGRLISLIGTLTLGWPLYLAFNMSGRPYDRFACHYDPYSPIFTKREWIQVYISDAGILGMAFMLYRIGVEKGSFWVMRIYGIPLVIVNGFLVLITYLQHTHPALPHYESSEWDWLRGALATVDRDYGVLNRVFHNITDTHVVHHLFSTMPHYHAKEATEAVKPVLGEYYRLDRTPVLKAIWREAKECVYVEPDEDADSDKGVVWYRKKL</sequence>
<feature type="chain" id="PRO_0000434638" description="Delta(12)-oleate desaturase">
    <location>
        <begin position="1"/>
        <end position="369"/>
    </location>
</feature>
<feature type="transmembrane region" description="Helical" evidence="1">
    <location>
        <begin position="41"/>
        <end position="61"/>
    </location>
</feature>
<feature type="transmembrane region" description="Helical" evidence="1">
    <location>
        <begin position="69"/>
        <end position="89"/>
    </location>
</feature>
<feature type="transmembrane region" description="Helical" evidence="1">
    <location>
        <begin position="102"/>
        <end position="122"/>
    </location>
</feature>
<feature type="transmembrane region" description="Helical" evidence="1">
    <location>
        <begin position="164"/>
        <end position="184"/>
    </location>
</feature>
<feature type="transmembrane region" description="Helical" evidence="1">
    <location>
        <begin position="207"/>
        <end position="227"/>
    </location>
</feature>
<feature type="transmembrane region" description="Helical" evidence="1">
    <location>
        <begin position="234"/>
        <end position="254"/>
    </location>
</feature>
<feature type="short sequence motif" description="Histidine box-1" evidence="4">
    <location>
        <begin position="90"/>
        <end position="94"/>
    </location>
</feature>
<feature type="short sequence motif" description="Histidine box-2" evidence="4">
    <location>
        <begin position="126"/>
        <end position="130"/>
    </location>
</feature>
<feature type="short sequence motif" description="Histidine box-3" evidence="4">
    <location>
        <begin position="300"/>
        <end position="304"/>
    </location>
</feature>
<protein>
    <recommendedName>
        <fullName evidence="3">Delta(12)-oleate desaturase</fullName>
        <shortName evidence="3">PgFAD2</shortName>
        <ecNumber evidence="4">1.14.19.-</ecNumber>
    </recommendedName>
</protein>
<gene>
    <name evidence="3" type="primary">FAD2</name>
</gene>
<reference key="1">
    <citation type="journal article" date="2003" name="J. Biol. Chem.">
        <title>Delta 12-oleate desaturase-related enzymes associated with formation of conjugated trans-delta 11, cis-delta 13 double bonds.</title>
        <authorList>
            <person name="Iwabuchi M."/>
            <person name="Kohno-Murase J."/>
            <person name="Imamura J."/>
        </authorList>
    </citation>
    <scope>NUCLEOTIDE SEQUENCE [MRNA]</scope>
    <scope>FUNCTION</scope>
</reference>
<dbReference type="EC" id="1.14.19.-" evidence="4"/>
<dbReference type="EMBL" id="AY178445">
    <property type="protein sequence ID" value="AAO37752.1"/>
    <property type="molecule type" value="mRNA"/>
</dbReference>
<dbReference type="SMR" id="Q84UB9"/>
<dbReference type="UniPathway" id="UPA00658"/>
<dbReference type="GO" id="GO:0016020">
    <property type="term" value="C:membrane"/>
    <property type="evidence" value="ECO:0007669"/>
    <property type="project" value="UniProtKB-SubCell"/>
</dbReference>
<dbReference type="GO" id="GO:0016717">
    <property type="term" value="F:oxidoreductase activity, acting on paired donors, with oxidation of a pair of donors resulting in the reduction of molecular oxygen to two molecules of water"/>
    <property type="evidence" value="ECO:0007669"/>
    <property type="project" value="InterPro"/>
</dbReference>
<dbReference type="GO" id="GO:0006636">
    <property type="term" value="P:unsaturated fatty acid biosynthetic process"/>
    <property type="evidence" value="ECO:0007669"/>
    <property type="project" value="UniProtKB-UniPathway"/>
</dbReference>
<dbReference type="CDD" id="cd03507">
    <property type="entry name" value="Delta12-FADS-like"/>
    <property type="match status" value="1"/>
</dbReference>
<dbReference type="InterPro" id="IPR005804">
    <property type="entry name" value="FA_desaturase_dom"/>
</dbReference>
<dbReference type="InterPro" id="IPR021863">
    <property type="entry name" value="FAS_N"/>
</dbReference>
<dbReference type="InterPro" id="IPR012171">
    <property type="entry name" value="Fatty_acid_desaturase"/>
</dbReference>
<dbReference type="PANTHER" id="PTHR32100">
    <property type="entry name" value="OMEGA-6 FATTY ACID DESATURASE, CHLOROPLASTIC"/>
    <property type="match status" value="1"/>
</dbReference>
<dbReference type="Pfam" id="PF11960">
    <property type="entry name" value="DUF3474"/>
    <property type="match status" value="1"/>
</dbReference>
<dbReference type="Pfam" id="PF00487">
    <property type="entry name" value="FA_desaturase"/>
    <property type="match status" value="1"/>
</dbReference>
<accession>Q84UB9</accession>